<gene>
    <name evidence="1" type="primary">gcvPB</name>
    <name type="ordered locus">STK_12080</name>
</gene>
<dbReference type="EC" id="1.4.4.2" evidence="1"/>
<dbReference type="EMBL" id="BA000023">
    <property type="protein sequence ID" value="BAK54485.1"/>
    <property type="molecule type" value="Genomic_DNA"/>
</dbReference>
<dbReference type="RefSeq" id="WP_010979227.1">
    <property type="nucleotide sequence ID" value="NC_003106.2"/>
</dbReference>
<dbReference type="SMR" id="Q972C0"/>
<dbReference type="STRING" id="273063.STK_12080"/>
<dbReference type="GeneID" id="1459206"/>
<dbReference type="KEGG" id="sto:STK_12080"/>
<dbReference type="PATRIC" id="fig|273063.9.peg.1365"/>
<dbReference type="eggNOG" id="arCOG00076">
    <property type="taxonomic scope" value="Archaea"/>
</dbReference>
<dbReference type="OrthoDB" id="371967at2157"/>
<dbReference type="Proteomes" id="UP000001015">
    <property type="component" value="Chromosome"/>
</dbReference>
<dbReference type="GO" id="GO:0005829">
    <property type="term" value="C:cytosol"/>
    <property type="evidence" value="ECO:0007669"/>
    <property type="project" value="TreeGrafter"/>
</dbReference>
<dbReference type="GO" id="GO:0005960">
    <property type="term" value="C:glycine cleavage complex"/>
    <property type="evidence" value="ECO:0007669"/>
    <property type="project" value="TreeGrafter"/>
</dbReference>
<dbReference type="GO" id="GO:0016594">
    <property type="term" value="F:glycine binding"/>
    <property type="evidence" value="ECO:0007669"/>
    <property type="project" value="TreeGrafter"/>
</dbReference>
<dbReference type="GO" id="GO:0004375">
    <property type="term" value="F:glycine dehydrogenase (decarboxylating) activity"/>
    <property type="evidence" value="ECO:0007669"/>
    <property type="project" value="UniProtKB-EC"/>
</dbReference>
<dbReference type="GO" id="GO:0030170">
    <property type="term" value="F:pyridoxal phosphate binding"/>
    <property type="evidence" value="ECO:0007669"/>
    <property type="project" value="TreeGrafter"/>
</dbReference>
<dbReference type="GO" id="GO:0019464">
    <property type="term" value="P:glycine decarboxylation via glycine cleavage system"/>
    <property type="evidence" value="ECO:0007669"/>
    <property type="project" value="UniProtKB-UniRule"/>
</dbReference>
<dbReference type="FunFam" id="3.40.640.10:FF:000224">
    <property type="entry name" value="Probable glycine dehydrogenase (decarboxylating) subunit 2"/>
    <property type="match status" value="1"/>
</dbReference>
<dbReference type="Gene3D" id="6.20.440.10">
    <property type="match status" value="1"/>
</dbReference>
<dbReference type="Gene3D" id="3.90.1150.10">
    <property type="entry name" value="Aspartate Aminotransferase, domain 1"/>
    <property type="match status" value="1"/>
</dbReference>
<dbReference type="Gene3D" id="3.40.640.10">
    <property type="entry name" value="Type I PLP-dependent aspartate aminotransferase-like (Major domain)"/>
    <property type="match status" value="1"/>
</dbReference>
<dbReference type="HAMAP" id="MF_00713">
    <property type="entry name" value="GcvPB"/>
    <property type="match status" value="1"/>
</dbReference>
<dbReference type="InterPro" id="IPR023012">
    <property type="entry name" value="GcvPB"/>
</dbReference>
<dbReference type="InterPro" id="IPR049316">
    <property type="entry name" value="GDC-P_C"/>
</dbReference>
<dbReference type="InterPro" id="IPR049315">
    <property type="entry name" value="GDC-P_N"/>
</dbReference>
<dbReference type="InterPro" id="IPR020581">
    <property type="entry name" value="GDC_P"/>
</dbReference>
<dbReference type="InterPro" id="IPR015424">
    <property type="entry name" value="PyrdxlP-dep_Trfase"/>
</dbReference>
<dbReference type="InterPro" id="IPR015421">
    <property type="entry name" value="PyrdxlP-dep_Trfase_major"/>
</dbReference>
<dbReference type="InterPro" id="IPR015422">
    <property type="entry name" value="PyrdxlP-dep_Trfase_small"/>
</dbReference>
<dbReference type="NCBIfam" id="NF003346">
    <property type="entry name" value="PRK04366.1"/>
    <property type="match status" value="1"/>
</dbReference>
<dbReference type="PANTHER" id="PTHR11773:SF1">
    <property type="entry name" value="GLYCINE DEHYDROGENASE (DECARBOXYLATING), MITOCHONDRIAL"/>
    <property type="match status" value="1"/>
</dbReference>
<dbReference type="PANTHER" id="PTHR11773">
    <property type="entry name" value="GLYCINE DEHYDROGENASE, DECARBOXYLATING"/>
    <property type="match status" value="1"/>
</dbReference>
<dbReference type="Pfam" id="PF21478">
    <property type="entry name" value="GcvP2_C"/>
    <property type="match status" value="1"/>
</dbReference>
<dbReference type="Pfam" id="PF02347">
    <property type="entry name" value="GDC-P"/>
    <property type="match status" value="1"/>
</dbReference>
<dbReference type="SUPFAM" id="SSF53383">
    <property type="entry name" value="PLP-dependent transferases"/>
    <property type="match status" value="1"/>
</dbReference>
<evidence type="ECO:0000255" key="1">
    <source>
        <dbReference type="HAMAP-Rule" id="MF_00713"/>
    </source>
</evidence>
<organism>
    <name type="scientific">Sulfurisphaera tokodaii (strain DSM 16993 / JCM 10545 / NBRC 100140 / 7)</name>
    <name type="common">Sulfolobus tokodaii</name>
    <dbReference type="NCBI Taxonomy" id="273063"/>
    <lineage>
        <taxon>Archaea</taxon>
        <taxon>Thermoproteota</taxon>
        <taxon>Thermoprotei</taxon>
        <taxon>Sulfolobales</taxon>
        <taxon>Sulfolobaceae</taxon>
        <taxon>Sulfurisphaera</taxon>
    </lineage>
</organism>
<feature type="chain" id="PRO_0000167032" description="Probable glycine dehydrogenase (decarboxylating) subunit 2">
    <location>
        <begin position="1"/>
        <end position="505"/>
    </location>
</feature>
<feature type="modified residue" description="N6-(pyridoxal phosphate)lysine" evidence="1">
    <location>
        <position position="274"/>
    </location>
</feature>
<keyword id="KW-0560">Oxidoreductase</keyword>
<keyword id="KW-0663">Pyridoxal phosphate</keyword>
<keyword id="KW-1185">Reference proteome</keyword>
<protein>
    <recommendedName>
        <fullName evidence="1">Probable glycine dehydrogenase (decarboxylating) subunit 2</fullName>
        <ecNumber evidence="1">1.4.4.2</ecNumber>
    </recommendedName>
    <alternativeName>
        <fullName evidence="1">Glycine cleavage system P-protein subunit 2</fullName>
    </alternativeName>
    <alternativeName>
        <fullName evidence="1">Glycine decarboxylase subunit 2</fullName>
    </alternativeName>
    <alternativeName>
        <fullName evidence="1">Glycine dehydrogenase (aminomethyl-transferring) subunit 2</fullName>
    </alternativeName>
</protein>
<sequence length="505" mass="55985">MSWHQAVWNEPLIFEYKGKGRIGFKIPEEEELKKEISINIPEKLRRKEIDLPELSELEVIRHFIRLSQMSFGVDNGMVPLGSCTMKYNPKIEEEAELLTQNLHPLQDDSTVQGILEVLYYMQKWLAEITGMDLCSLQVPAGAAGELAGVLMIKKYHETKGRGNRDEMLVADTAHGTNPASASMENFKVIYIKSNSEGLVDVDILKEIVSERTAGFMLTNPNTLGLFEENILDIAKYIHSVDAKLYYDGANLNGILGVVRPGDMGFDIVHLNLHKTFAVPHGGGGPGAGAICAKGEMVNFLPYPLVEKKDGKYSLSYIPKYSIGKIATFYGNVGNVVRAYTYILGLGAEGISMIGKMSTLATNYLISQLKNVRGLELIAPYRPRKHEVVFSAKTLAKETGVTANDVAKALLDRGFYAPTIYFPPNVEEALMIEPTETEPKEVLDSFAIAIKEIINTAYSNPKEILDTPKNTSVKRLDQVIANHPSSVTPTYRVKRLREEGKIGSLK</sequence>
<comment type="function">
    <text evidence="1">The glycine cleavage system catalyzes the degradation of glycine. The P protein binds the alpha-amino group of glycine through its pyridoxal phosphate cofactor; CO(2) is released and the remaining methylamine moiety is then transferred to the lipoamide cofactor of the H protein.</text>
</comment>
<comment type="catalytic activity">
    <reaction evidence="1">
        <text>N(6)-[(R)-lipoyl]-L-lysyl-[glycine-cleavage complex H protein] + glycine + H(+) = N(6)-[(R)-S(8)-aminomethyldihydrolipoyl]-L-lysyl-[glycine-cleavage complex H protein] + CO2</text>
        <dbReference type="Rhea" id="RHEA:24304"/>
        <dbReference type="Rhea" id="RHEA-COMP:10494"/>
        <dbReference type="Rhea" id="RHEA-COMP:10495"/>
        <dbReference type="ChEBI" id="CHEBI:15378"/>
        <dbReference type="ChEBI" id="CHEBI:16526"/>
        <dbReference type="ChEBI" id="CHEBI:57305"/>
        <dbReference type="ChEBI" id="CHEBI:83099"/>
        <dbReference type="ChEBI" id="CHEBI:83143"/>
        <dbReference type="EC" id="1.4.4.2"/>
    </reaction>
</comment>
<comment type="cofactor">
    <cofactor evidence="1">
        <name>pyridoxal 5'-phosphate</name>
        <dbReference type="ChEBI" id="CHEBI:597326"/>
    </cofactor>
</comment>
<comment type="subunit">
    <text evidence="1">The glycine cleavage system is composed of four proteins: P, T, L and H. In this organism, the P 'protein' is a heterodimer of two subunits.</text>
</comment>
<comment type="similarity">
    <text evidence="1">Belongs to the GcvP family. C-terminal subunit subfamily.</text>
</comment>
<name>GCSPB_SULTO</name>
<reference key="1">
    <citation type="journal article" date="2001" name="DNA Res.">
        <title>Complete genome sequence of an aerobic thermoacidophilic Crenarchaeon, Sulfolobus tokodaii strain7.</title>
        <authorList>
            <person name="Kawarabayasi Y."/>
            <person name="Hino Y."/>
            <person name="Horikawa H."/>
            <person name="Jin-no K."/>
            <person name="Takahashi M."/>
            <person name="Sekine M."/>
            <person name="Baba S."/>
            <person name="Ankai A."/>
            <person name="Kosugi H."/>
            <person name="Hosoyama A."/>
            <person name="Fukui S."/>
            <person name="Nagai Y."/>
            <person name="Nishijima K."/>
            <person name="Otsuka R."/>
            <person name="Nakazawa H."/>
            <person name="Takamiya M."/>
            <person name="Kato Y."/>
            <person name="Yoshizawa T."/>
            <person name="Tanaka T."/>
            <person name="Kudoh Y."/>
            <person name="Yamazaki J."/>
            <person name="Kushida N."/>
            <person name="Oguchi A."/>
            <person name="Aoki K."/>
            <person name="Masuda S."/>
            <person name="Yanagii M."/>
            <person name="Nishimura M."/>
            <person name="Yamagishi A."/>
            <person name="Oshima T."/>
            <person name="Kikuchi H."/>
        </authorList>
    </citation>
    <scope>NUCLEOTIDE SEQUENCE [LARGE SCALE GENOMIC DNA]</scope>
    <source>
        <strain>DSM 16993 / JCM 10545 / NBRC 100140 / 7</strain>
    </source>
</reference>
<accession>Q972C0</accession>
<accession>F9VNX7</accession>
<proteinExistence type="inferred from homology"/>